<reference key="1">
    <citation type="journal article" date="2004" name="Nature">
        <title>Genome evolution in yeasts.</title>
        <authorList>
            <person name="Dujon B."/>
            <person name="Sherman D."/>
            <person name="Fischer G."/>
            <person name="Durrens P."/>
            <person name="Casaregola S."/>
            <person name="Lafontaine I."/>
            <person name="de Montigny J."/>
            <person name="Marck C."/>
            <person name="Neuveglise C."/>
            <person name="Talla E."/>
            <person name="Goffard N."/>
            <person name="Frangeul L."/>
            <person name="Aigle M."/>
            <person name="Anthouard V."/>
            <person name="Babour A."/>
            <person name="Barbe V."/>
            <person name="Barnay S."/>
            <person name="Blanchin S."/>
            <person name="Beckerich J.-M."/>
            <person name="Beyne E."/>
            <person name="Bleykasten C."/>
            <person name="Boisrame A."/>
            <person name="Boyer J."/>
            <person name="Cattolico L."/>
            <person name="Confanioleri F."/>
            <person name="de Daruvar A."/>
            <person name="Despons L."/>
            <person name="Fabre E."/>
            <person name="Fairhead C."/>
            <person name="Ferry-Dumazet H."/>
            <person name="Groppi A."/>
            <person name="Hantraye F."/>
            <person name="Hennequin C."/>
            <person name="Jauniaux N."/>
            <person name="Joyet P."/>
            <person name="Kachouri R."/>
            <person name="Kerrest A."/>
            <person name="Koszul R."/>
            <person name="Lemaire M."/>
            <person name="Lesur I."/>
            <person name="Ma L."/>
            <person name="Muller H."/>
            <person name="Nicaud J.-M."/>
            <person name="Nikolski M."/>
            <person name="Oztas S."/>
            <person name="Ozier-Kalogeropoulos O."/>
            <person name="Pellenz S."/>
            <person name="Potier S."/>
            <person name="Richard G.-F."/>
            <person name="Straub M.-L."/>
            <person name="Suleau A."/>
            <person name="Swennen D."/>
            <person name="Tekaia F."/>
            <person name="Wesolowski-Louvel M."/>
            <person name="Westhof E."/>
            <person name="Wirth B."/>
            <person name="Zeniou-Meyer M."/>
            <person name="Zivanovic Y."/>
            <person name="Bolotin-Fukuhara M."/>
            <person name="Thierry A."/>
            <person name="Bouchier C."/>
            <person name="Caudron B."/>
            <person name="Scarpelli C."/>
            <person name="Gaillardin C."/>
            <person name="Weissenbach J."/>
            <person name="Wincker P."/>
            <person name="Souciet J.-L."/>
        </authorList>
    </citation>
    <scope>NUCLEOTIDE SEQUENCE [LARGE SCALE GENOMIC DNA]</scope>
    <source>
        <strain>ATCC 36239 / CBS 767 / BCRC 21394 / JCM 1990 / NBRC 0083 / IGC 2968</strain>
    </source>
</reference>
<sequence length="460" mass="52093">MSIEQAKKLDECFPTYKEEFEIPTFKSLGIQNDEYEDSTDSIYLCGNSLGLMPKITRTAINDELNAWSERGVESHFRHPGEEKGLTSWVDIDLPLLPLIAPIVGGKENEVAVMGTLTSNLNAMLMSFYKPSGKKTKILFEKQAFPSDYYAFLNAAKIFGYNEDHLIQIEIKEGKTYIETEDIIETITNHQDELALVCFSGIQYYTGQFFNIGEITECAKSFGITVGWDLAHAVGNVPLQLHDWDVDFAVWCSYKYLNSGPGGIAGIFVHEKHTKDNSIEQFKPRLAGWWGNNASDRFKMLEVFDPIKSALSYRQSNPSVIDVVAVKSSLELFKKVGGISELRKKSVELTGFLQALLTSSKYYIKQEETTDRLGFKILSPLNKGDRGCQLSVLFQPHYEEYSKNIMERVNKYLSDHAIVCDERRPDVIRLAPLPLYNTFSETFIAVQRLIEAMDKIAANEI</sequence>
<evidence type="ECO:0000255" key="1">
    <source>
        <dbReference type="HAMAP-Rule" id="MF_03017"/>
    </source>
</evidence>
<name>KYNU_DEBHA</name>
<feature type="chain" id="PRO_0000218662" description="Kynureninase">
    <location>
        <begin position="1"/>
        <end position="460"/>
    </location>
</feature>
<feature type="binding site" evidence="1">
    <location>
        <position position="116"/>
    </location>
    <ligand>
        <name>pyridoxal 5'-phosphate</name>
        <dbReference type="ChEBI" id="CHEBI:597326"/>
    </ligand>
</feature>
<feature type="binding site" evidence="1">
    <location>
        <position position="117"/>
    </location>
    <ligand>
        <name>pyridoxal 5'-phosphate</name>
        <dbReference type="ChEBI" id="CHEBI:597326"/>
    </ligand>
</feature>
<feature type="binding site" evidence="1">
    <location>
        <begin position="144"/>
        <end position="147"/>
    </location>
    <ligand>
        <name>pyridoxal 5'-phosphate</name>
        <dbReference type="ChEBI" id="CHEBI:597326"/>
    </ligand>
</feature>
<feature type="binding site" evidence="1">
    <location>
        <position position="199"/>
    </location>
    <ligand>
        <name>pyridoxal 5'-phosphate</name>
        <dbReference type="ChEBI" id="CHEBI:597326"/>
    </ligand>
</feature>
<feature type="binding site" evidence="1">
    <location>
        <position position="228"/>
    </location>
    <ligand>
        <name>pyridoxal 5'-phosphate</name>
        <dbReference type="ChEBI" id="CHEBI:597326"/>
    </ligand>
</feature>
<feature type="binding site" evidence="1">
    <location>
        <position position="231"/>
    </location>
    <ligand>
        <name>pyridoxal 5'-phosphate</name>
        <dbReference type="ChEBI" id="CHEBI:597326"/>
    </ligand>
</feature>
<feature type="binding site" evidence="1">
    <location>
        <position position="253"/>
    </location>
    <ligand>
        <name>pyridoxal 5'-phosphate</name>
        <dbReference type="ChEBI" id="CHEBI:597326"/>
    </ligand>
</feature>
<feature type="binding site" evidence="1">
    <location>
        <position position="288"/>
    </location>
    <ligand>
        <name>pyridoxal 5'-phosphate</name>
        <dbReference type="ChEBI" id="CHEBI:597326"/>
    </ligand>
</feature>
<feature type="binding site" evidence="1">
    <location>
        <position position="316"/>
    </location>
    <ligand>
        <name>pyridoxal 5'-phosphate</name>
        <dbReference type="ChEBI" id="CHEBI:597326"/>
    </ligand>
</feature>
<feature type="modified residue" description="N6-(pyridoxal phosphate)lysine" evidence="1">
    <location>
        <position position="254"/>
    </location>
</feature>
<keyword id="KW-0963">Cytoplasm</keyword>
<keyword id="KW-0378">Hydrolase</keyword>
<keyword id="KW-0662">Pyridine nucleotide biosynthesis</keyword>
<keyword id="KW-0663">Pyridoxal phosphate</keyword>
<keyword id="KW-1185">Reference proteome</keyword>
<comment type="function">
    <text evidence="1">Catalyzes the cleavage of L-kynurenine (L-Kyn) and L-3-hydroxykynurenine (L-3OHKyn) into anthranilic acid (AA) and 3-hydroxyanthranilic acid (3-OHAA), respectively.</text>
</comment>
<comment type="catalytic activity">
    <reaction evidence="1">
        <text>L-kynurenine + H2O = anthranilate + L-alanine + H(+)</text>
        <dbReference type="Rhea" id="RHEA:16813"/>
        <dbReference type="ChEBI" id="CHEBI:15377"/>
        <dbReference type="ChEBI" id="CHEBI:15378"/>
        <dbReference type="ChEBI" id="CHEBI:16567"/>
        <dbReference type="ChEBI" id="CHEBI:57959"/>
        <dbReference type="ChEBI" id="CHEBI:57972"/>
        <dbReference type="EC" id="3.7.1.3"/>
    </reaction>
</comment>
<comment type="catalytic activity">
    <reaction evidence="1">
        <text>3-hydroxy-L-kynurenine + H2O = 3-hydroxyanthranilate + L-alanine + H(+)</text>
        <dbReference type="Rhea" id="RHEA:25143"/>
        <dbReference type="ChEBI" id="CHEBI:15377"/>
        <dbReference type="ChEBI" id="CHEBI:15378"/>
        <dbReference type="ChEBI" id="CHEBI:36559"/>
        <dbReference type="ChEBI" id="CHEBI:57972"/>
        <dbReference type="ChEBI" id="CHEBI:58125"/>
        <dbReference type="EC" id="3.7.1.3"/>
    </reaction>
</comment>
<comment type="cofactor">
    <cofactor evidence="1">
        <name>pyridoxal 5'-phosphate</name>
        <dbReference type="ChEBI" id="CHEBI:597326"/>
    </cofactor>
</comment>
<comment type="pathway">
    <text evidence="1">Amino-acid degradation; L-kynurenine degradation; L-alanine and anthranilate from L-kynurenine: step 1/1.</text>
</comment>
<comment type="pathway">
    <text evidence="1">Cofactor biosynthesis; NAD(+) biosynthesis; quinolinate from L-kynurenine: step 2/3.</text>
</comment>
<comment type="subunit">
    <text evidence="1">Homodimer.</text>
</comment>
<comment type="subcellular location">
    <subcellularLocation>
        <location evidence="1">Cytoplasm</location>
    </subcellularLocation>
</comment>
<comment type="similarity">
    <text evidence="1">Belongs to the kynureninase family.</text>
</comment>
<dbReference type="EC" id="3.7.1.3" evidence="1"/>
<dbReference type="EMBL" id="CR382139">
    <property type="protein sequence ID" value="CAG90638.1"/>
    <property type="molecule type" value="Genomic_DNA"/>
</dbReference>
<dbReference type="RefSeq" id="XP_462152.1">
    <property type="nucleotide sequence ID" value="XM_462152.1"/>
</dbReference>
<dbReference type="SMR" id="Q6BI19"/>
<dbReference type="FunCoup" id="Q6BI19">
    <property type="interactions" value="226"/>
</dbReference>
<dbReference type="STRING" id="284592.Q6BI19"/>
<dbReference type="GeneID" id="2905066"/>
<dbReference type="KEGG" id="dha:DEHA2G14080g"/>
<dbReference type="VEuPathDB" id="FungiDB:DEHA2G14080g"/>
<dbReference type="eggNOG" id="KOG3846">
    <property type="taxonomic scope" value="Eukaryota"/>
</dbReference>
<dbReference type="HOGENOM" id="CLU_003433_4_0_1"/>
<dbReference type="InParanoid" id="Q6BI19"/>
<dbReference type="OMA" id="LPGWNSH"/>
<dbReference type="OrthoDB" id="5978656at2759"/>
<dbReference type="UniPathway" id="UPA00253">
    <property type="reaction ID" value="UER00329"/>
</dbReference>
<dbReference type="UniPathway" id="UPA00334">
    <property type="reaction ID" value="UER00455"/>
</dbReference>
<dbReference type="Proteomes" id="UP000000599">
    <property type="component" value="Chromosome G"/>
</dbReference>
<dbReference type="GO" id="GO:0005737">
    <property type="term" value="C:cytoplasm"/>
    <property type="evidence" value="ECO:0007669"/>
    <property type="project" value="UniProtKB-SubCell"/>
</dbReference>
<dbReference type="GO" id="GO:0030429">
    <property type="term" value="F:kynureninase activity"/>
    <property type="evidence" value="ECO:0007669"/>
    <property type="project" value="UniProtKB-UniRule"/>
</dbReference>
<dbReference type="GO" id="GO:0030170">
    <property type="term" value="F:pyridoxal phosphate binding"/>
    <property type="evidence" value="ECO:0007669"/>
    <property type="project" value="UniProtKB-UniRule"/>
</dbReference>
<dbReference type="GO" id="GO:0034354">
    <property type="term" value="P:'de novo' NAD biosynthetic process from L-tryptophan"/>
    <property type="evidence" value="ECO:0007669"/>
    <property type="project" value="UniProtKB-UniRule"/>
</dbReference>
<dbReference type="GO" id="GO:0043420">
    <property type="term" value="P:anthranilate metabolic process"/>
    <property type="evidence" value="ECO:0007669"/>
    <property type="project" value="UniProtKB-UniRule"/>
</dbReference>
<dbReference type="GO" id="GO:0097053">
    <property type="term" value="P:L-kynurenine catabolic process"/>
    <property type="evidence" value="ECO:0007669"/>
    <property type="project" value="UniProtKB-UniRule"/>
</dbReference>
<dbReference type="GO" id="GO:0019441">
    <property type="term" value="P:L-tryptophan catabolic process to kynurenine"/>
    <property type="evidence" value="ECO:0007669"/>
    <property type="project" value="TreeGrafter"/>
</dbReference>
<dbReference type="GO" id="GO:0019805">
    <property type="term" value="P:quinolinate biosynthetic process"/>
    <property type="evidence" value="ECO:0007669"/>
    <property type="project" value="UniProtKB-UniRule"/>
</dbReference>
<dbReference type="FunFam" id="3.40.640.10:FF:000031">
    <property type="entry name" value="Kynureninase"/>
    <property type="match status" value="1"/>
</dbReference>
<dbReference type="Gene3D" id="3.90.1150.10">
    <property type="entry name" value="Aspartate Aminotransferase, domain 1"/>
    <property type="match status" value="1"/>
</dbReference>
<dbReference type="Gene3D" id="3.40.640.10">
    <property type="entry name" value="Type I PLP-dependent aspartate aminotransferase-like (Major domain)"/>
    <property type="match status" value="1"/>
</dbReference>
<dbReference type="HAMAP" id="MF_01970">
    <property type="entry name" value="Kynureninase"/>
    <property type="match status" value="1"/>
</dbReference>
<dbReference type="InterPro" id="IPR010111">
    <property type="entry name" value="Kynureninase"/>
</dbReference>
<dbReference type="InterPro" id="IPR015424">
    <property type="entry name" value="PyrdxlP-dep_Trfase"/>
</dbReference>
<dbReference type="InterPro" id="IPR015421">
    <property type="entry name" value="PyrdxlP-dep_Trfase_major"/>
</dbReference>
<dbReference type="InterPro" id="IPR015422">
    <property type="entry name" value="PyrdxlP-dep_Trfase_small"/>
</dbReference>
<dbReference type="NCBIfam" id="TIGR01814">
    <property type="entry name" value="kynureninase"/>
    <property type="match status" value="1"/>
</dbReference>
<dbReference type="PANTHER" id="PTHR14084">
    <property type="entry name" value="KYNURENINASE"/>
    <property type="match status" value="1"/>
</dbReference>
<dbReference type="PANTHER" id="PTHR14084:SF0">
    <property type="entry name" value="KYNURENINASE"/>
    <property type="match status" value="1"/>
</dbReference>
<dbReference type="Pfam" id="PF22580">
    <property type="entry name" value="KYNU_C"/>
    <property type="match status" value="1"/>
</dbReference>
<dbReference type="PIRSF" id="PIRSF038800">
    <property type="entry name" value="KYNU"/>
    <property type="match status" value="1"/>
</dbReference>
<dbReference type="SUPFAM" id="SSF53383">
    <property type="entry name" value="PLP-dependent transferases"/>
    <property type="match status" value="1"/>
</dbReference>
<accession>Q6BI19</accession>
<gene>
    <name evidence="1" type="primary">BNA5</name>
    <name type="ordered locus">DEHA2G14080g</name>
</gene>
<organism>
    <name type="scientific">Debaryomyces hansenii (strain ATCC 36239 / CBS 767 / BCRC 21394 / JCM 1990 / NBRC 0083 / IGC 2968)</name>
    <name type="common">Yeast</name>
    <name type="synonym">Torulaspora hansenii</name>
    <dbReference type="NCBI Taxonomy" id="284592"/>
    <lineage>
        <taxon>Eukaryota</taxon>
        <taxon>Fungi</taxon>
        <taxon>Dikarya</taxon>
        <taxon>Ascomycota</taxon>
        <taxon>Saccharomycotina</taxon>
        <taxon>Pichiomycetes</taxon>
        <taxon>Debaryomycetaceae</taxon>
        <taxon>Debaryomyces</taxon>
    </lineage>
</organism>
<protein>
    <recommendedName>
        <fullName evidence="1">Kynureninase</fullName>
        <ecNumber evidence="1">3.7.1.3</ecNumber>
    </recommendedName>
    <alternativeName>
        <fullName evidence="1">Biosynthesis of nicotinic acid protein 5</fullName>
    </alternativeName>
    <alternativeName>
        <fullName evidence="1">L-kynurenine hydrolase</fullName>
    </alternativeName>
</protein>
<proteinExistence type="inferred from homology"/>